<reference key="1">
    <citation type="journal article" date="2003" name="Plant Physiol.">
        <title>MPB2C, a microtubule-associated plant protein binds to and interferes with cell-to-cell transport of tobacco mosaic virus movement protein.</title>
        <authorList>
            <person name="Kragler F."/>
            <person name="Curin M."/>
            <person name="Trutnyeva K."/>
            <person name="Gansch A."/>
            <person name="Waigmann E."/>
        </authorList>
    </citation>
    <scope>NUCLEOTIDE SEQUENCE [MRNA] (ISOFORM 2)</scope>
    <scope>FUNCTION</scope>
    <scope>INTERACTION WITH TOBACCO MOSAIC VIRUS MP</scope>
    <scope>SUBCELLULAR LOCATION</scope>
    <scope>TISSUE SPECIFICITY</scope>
    <source>
        <strain>cv. Samsun NN</strain>
        <strain>cv. Turkish</strain>
    </source>
</reference>
<reference key="2">
    <citation type="journal article" date="2014" name="Nat. Commun.">
        <title>The tobacco genome sequence and its comparison with those of tomato and potato.</title>
        <authorList>
            <person name="Sierro N."/>
            <person name="Battey J.N."/>
            <person name="Ouadi S."/>
            <person name="Bakaher N."/>
            <person name="Bovet L."/>
            <person name="Willig A."/>
            <person name="Goepfert S."/>
            <person name="Peitsch M.C."/>
            <person name="Ivanov N.V."/>
        </authorList>
    </citation>
    <scope>NUCLEOTIDE SEQUENCE [LARGE SCALE GENOMIC DNA]</scope>
    <source>
        <strain>cv. TN90</strain>
    </source>
</reference>
<reference key="3">
    <citation type="journal article" date="2007" name="Plant Cell">
        <title>MPB2C, a microtubule-associated protein, regulates non-cell-autonomy of the homeodomain protein KNOTTED1.</title>
        <authorList>
            <person name="Winter N."/>
            <person name="Kollwig G."/>
            <person name="Zhang S."/>
            <person name="Kragler F."/>
        </authorList>
    </citation>
    <scope>FUNCTION</scope>
    <scope>SUBCELLULAR LOCATION</scope>
    <scope>INTERACTION WITH KN-1 AND TOBACCO MOSAIC VIRUS MP</scope>
</reference>
<organism>
    <name type="scientific">Nicotiana tabacum</name>
    <name type="common">Common tobacco</name>
    <dbReference type="NCBI Taxonomy" id="4097"/>
    <lineage>
        <taxon>Eukaryota</taxon>
        <taxon>Viridiplantae</taxon>
        <taxon>Streptophyta</taxon>
        <taxon>Embryophyta</taxon>
        <taxon>Tracheophyta</taxon>
        <taxon>Spermatophyta</taxon>
        <taxon>Magnoliopsida</taxon>
        <taxon>eudicotyledons</taxon>
        <taxon>Gunneridae</taxon>
        <taxon>Pentapetalae</taxon>
        <taxon>asterids</taxon>
        <taxon>lamiids</taxon>
        <taxon>Solanales</taxon>
        <taxon>Solanaceae</taxon>
        <taxon>Nicotianoideae</taxon>
        <taxon>Nicotianeae</taxon>
        <taxon>Nicotiana</taxon>
    </lineage>
</organism>
<sequence length="337" mass="37930">MYKPQQQQQLFDLQDNNGAAFDNGGTDPSCWLSHENEISRTDSSLSSSNVDPLLFNDLVQIVPLVQSLIDRKEKSSFTRRGSMTYTKMPSRESLYKKTSEVKGRNAGQSTATKKHRDQNKNVSSSQDGYAENFSTPSSTSSLTEKDREELMTLREKVEDLQKKLLEKDELLKEAEILKNEITATNAELDEMKKDISEKDFLVKTTQVQLSDALVKLADKKAAVEKLEWEAMTSSKKVERLQEDLDLLQGEISSFIQFVHALTGNDSRDSAEECNVIPYPWDQNVEIDKLNERDLQKMEAAREAYIAAVAAAKENPDEASLSAASTARSYLQSLVLRT</sequence>
<comment type="function">
    <text evidence="1 4 5">Prevents homeodomain proteins (e.g. STM) association to plasmodesmata and, consequently, cell-to-cell transport. Binds to RNA. Alters KN1 RNA-binding capacity (PubMed:17965274). Regulates cytoskeleton (e.g. actin) organization that determinates cell shape (By similarity). Interferes with cell-to-cell transport of tobacco mosaic virus movement protein (TMV-MP) by mediating its accumulation at microtubules, thus interfering with cell-to-cell virus movement.</text>
</comment>
<comment type="subunit">
    <text evidence="4 5">Interacts with KN-1 (PubMed:17965274). Binds to tobacco mosaic virus movement protein (TMV-MP) at microtubules (PubMed:12913144, PubMed:17965274).</text>
</comment>
<comment type="subcellular location">
    <subcellularLocation>
        <location evidence="4">Cytoplasm</location>
        <location evidence="4">Cytoskeleton</location>
    </subcellularLocation>
    <text evidence="4 5">Microtubule-associated (PubMed:12913144). Localized in cytosolic punctae when associated with KN-1 (PubMed:17965274).</text>
</comment>
<comment type="alternative products">
    <event type="alternative splicing"/>
    <isoform>
        <id>A0A1S3X835-1</id>
        <name>1</name>
        <sequence type="displayed"/>
    </isoform>
    <isoform>
        <id>A0A1S3X835-2</id>
        <name>2</name>
        <sequence type="described" ref="VSP_059025"/>
    </isoform>
</comment>
<comment type="tissue specificity">
    <text evidence="4">Constitutively expressed in leaves.</text>
</comment>
<comment type="similarity">
    <text evidence="8">Belongs to the microtubule binding protein 2C family.</text>
</comment>
<dbReference type="EMBL" id="AF326729">
    <property type="protein sequence ID" value="AAL95696.1"/>
    <property type="molecule type" value="mRNA"/>
</dbReference>
<dbReference type="RefSeq" id="NP_001311679.1">
    <molecule id="A0A1S3X835-2"/>
    <property type="nucleotide sequence ID" value="NM_001324750.1"/>
</dbReference>
<dbReference type="RefSeq" id="XP_016436046.1">
    <property type="nucleotide sequence ID" value="XM_016580560.1"/>
</dbReference>
<dbReference type="SMR" id="A0A1S3X835"/>
<dbReference type="STRING" id="4097.A0A1S3X835"/>
<dbReference type="PaxDb" id="4097-A0A1S3X835"/>
<dbReference type="GeneID" id="107762219"/>
<dbReference type="KEGG" id="nta:107762219"/>
<dbReference type="OMA" id="NEMNVAN"/>
<dbReference type="OrthoDB" id="1915670at2759"/>
<dbReference type="Proteomes" id="UP000084051">
    <property type="component" value="Unplaced"/>
</dbReference>
<dbReference type="GO" id="GO:0005737">
    <property type="term" value="C:cytoplasm"/>
    <property type="evidence" value="ECO:0007669"/>
    <property type="project" value="UniProtKB-KW"/>
</dbReference>
<dbReference type="GO" id="GO:0015630">
    <property type="term" value="C:microtubule cytoskeleton"/>
    <property type="evidence" value="ECO:0000314"/>
    <property type="project" value="UniProtKB"/>
</dbReference>
<dbReference type="GO" id="GO:0008017">
    <property type="term" value="F:microtubule binding"/>
    <property type="evidence" value="ECO:0000314"/>
    <property type="project" value="UniProtKB"/>
</dbReference>
<dbReference type="GO" id="GO:0003723">
    <property type="term" value="F:RNA binding"/>
    <property type="evidence" value="ECO:0000314"/>
    <property type="project" value="UniProtKB"/>
</dbReference>
<dbReference type="GO" id="GO:0006952">
    <property type="term" value="P:defense response"/>
    <property type="evidence" value="ECO:0007669"/>
    <property type="project" value="UniProtKB-KW"/>
</dbReference>
<dbReference type="GO" id="GO:0051224">
    <property type="term" value="P:negative regulation of protein transport"/>
    <property type="evidence" value="ECO:0000314"/>
    <property type="project" value="UniProtKB"/>
</dbReference>
<dbReference type="GO" id="GO:0010497">
    <property type="term" value="P:plasmodesmata-mediated intercellular transport"/>
    <property type="evidence" value="ECO:0000314"/>
    <property type="project" value="UniProtKB"/>
</dbReference>
<dbReference type="GO" id="GO:0002230">
    <property type="term" value="P:positive regulation of defense response to virus by host"/>
    <property type="evidence" value="ECO:0000250"/>
    <property type="project" value="UniProtKB"/>
</dbReference>
<dbReference type="GO" id="GO:0051493">
    <property type="term" value="P:regulation of cytoskeleton organization"/>
    <property type="evidence" value="ECO:0000250"/>
    <property type="project" value="UniProtKB"/>
</dbReference>
<dbReference type="GO" id="GO:0046740">
    <property type="term" value="P:transport of virus in host, cell to cell"/>
    <property type="evidence" value="ECO:0000314"/>
    <property type="project" value="UniProtKB"/>
</dbReference>
<dbReference type="InterPro" id="IPR040289">
    <property type="entry name" value="MBP2C"/>
</dbReference>
<dbReference type="PANTHER" id="PTHR35502">
    <property type="entry name" value="PROTEIN MICROTUBULE BINDING PROTEIN 2C"/>
    <property type="match status" value="1"/>
</dbReference>
<dbReference type="PANTHER" id="PTHR35502:SF2">
    <property type="entry name" value="PROTEIN MICROTUBULE BINDING PROTEIN 2C"/>
    <property type="match status" value="1"/>
</dbReference>
<keyword id="KW-0025">Alternative splicing</keyword>
<keyword id="KW-0175">Coiled coil</keyword>
<keyword id="KW-0963">Cytoplasm</keyword>
<keyword id="KW-0206">Cytoskeleton</keyword>
<keyword id="KW-0945">Host-virus interaction</keyword>
<keyword id="KW-0611">Plant defense</keyword>
<keyword id="KW-1185">Reference proteome</keyword>
<keyword id="KW-0694">RNA-binding</keyword>
<name>MBP2C_TOBAC</name>
<feature type="chain" id="PRO_0000441030" description="Protein MICROTUBULE BINDING PROTEIN 2C">
    <location>
        <begin position="1"/>
        <end position="337"/>
    </location>
</feature>
<feature type="region of interest" description="Disordered" evidence="3">
    <location>
        <begin position="80"/>
        <end position="147"/>
    </location>
</feature>
<feature type="coiled-coil region" evidence="2">
    <location>
        <begin position="143"/>
        <end position="194"/>
    </location>
</feature>
<feature type="coiled-coil region" evidence="2">
    <location>
        <begin position="223"/>
        <end position="250"/>
    </location>
</feature>
<feature type="coiled-coil region" evidence="2">
    <location>
        <begin position="294"/>
        <end position="314"/>
    </location>
</feature>
<feature type="compositionally biased region" description="Basic and acidic residues" evidence="3">
    <location>
        <begin position="89"/>
        <end position="103"/>
    </location>
</feature>
<feature type="compositionally biased region" description="Polar residues" evidence="3">
    <location>
        <begin position="120"/>
        <end position="142"/>
    </location>
</feature>
<feature type="splice variant" id="VSP_059025" description="In isoform 2.">
    <original>MYKPQQQQQLFDLQDNNGA</original>
    <variation>MAL</variation>
    <location>
        <begin position="1"/>
        <end position="19"/>
    </location>
</feature>
<gene>
    <name evidence="7" type="primary">MBP2C</name>
    <name evidence="9" type="ORF">LOC107762219</name>
</gene>
<evidence type="ECO:0000250" key="1">
    <source>
        <dbReference type="UniProtKB" id="Q9LEZ4"/>
    </source>
</evidence>
<evidence type="ECO:0000255" key="2"/>
<evidence type="ECO:0000256" key="3">
    <source>
        <dbReference type="SAM" id="MobiDB-lite"/>
    </source>
</evidence>
<evidence type="ECO:0000269" key="4">
    <source>
    </source>
</evidence>
<evidence type="ECO:0000269" key="5">
    <source>
    </source>
</evidence>
<evidence type="ECO:0000303" key="6">
    <source>
    </source>
</evidence>
<evidence type="ECO:0000303" key="7">
    <source>
    </source>
</evidence>
<evidence type="ECO:0000305" key="8"/>
<evidence type="ECO:0000312" key="9">
    <source>
        <dbReference type="RefSeq" id="XP_016436046.1"/>
    </source>
</evidence>
<proteinExistence type="evidence at protein level"/>
<protein>
    <recommendedName>
        <fullName evidence="7">Protein MICROTUBULE BINDING PROTEIN 2C</fullName>
        <shortName evidence="7">NtMBP2C</shortName>
    </recommendedName>
    <alternativeName>
        <fullName evidence="7">Movement protein binding protein 2C</fullName>
    </alternativeName>
    <alternativeName>
        <fullName evidence="6">TMV-MP30 binding protein 2C</fullName>
    </alternativeName>
</protein>
<accession>A0A1S3X835</accession>
<accession>Q8S556</accession>